<proteinExistence type="evidence at protein level"/>
<reference evidence="6" key="1">
    <citation type="journal article" date="1995" name="Plant Mol. Biol.">
        <title>Isolation and characterization of gmsti, a stress-inducible gene from soybean (Glycine max) coding for a protein belonging to the TPR (tetratricopeptide repeats) family.</title>
        <authorList>
            <person name="Torres J.H."/>
            <person name="Chatellard P."/>
            <person name="Stutz E."/>
        </authorList>
    </citation>
    <scope>NUCLEOTIDE SEQUENCE [MRNA]</scope>
    <scope>INDUCTION</scope>
    <source>
        <strain evidence="7">cv. Williams</strain>
        <tissue evidence="7">Epicotyl</tissue>
    </source>
</reference>
<reference key="2">
    <citation type="journal article" date="2010" name="Nature">
        <title>Genome sequence of the palaeopolyploid soybean.</title>
        <authorList>
            <person name="Schmutz J."/>
            <person name="Cannon S.B."/>
            <person name="Schlueter J."/>
            <person name="Ma J."/>
            <person name="Mitros T."/>
            <person name="Nelson W."/>
            <person name="Hyten D.L."/>
            <person name="Song Q."/>
            <person name="Thelen J.J."/>
            <person name="Cheng J."/>
            <person name="Xu D."/>
            <person name="Hellsten U."/>
            <person name="May G.D."/>
            <person name="Yu Y."/>
            <person name="Sakurai T."/>
            <person name="Umezawa T."/>
            <person name="Bhattacharyya M.K."/>
            <person name="Sandhu D."/>
            <person name="Valliyodan B."/>
            <person name="Lindquist E."/>
            <person name="Peto M."/>
            <person name="Grant D."/>
            <person name="Shu S."/>
            <person name="Goodstein D."/>
            <person name="Barry K."/>
            <person name="Futrell-Griggs M."/>
            <person name="Abernathy B."/>
            <person name="Du J."/>
            <person name="Tian Z."/>
            <person name="Zhu L."/>
            <person name="Gill N."/>
            <person name="Joshi T."/>
            <person name="Libault M."/>
            <person name="Sethuraman A."/>
            <person name="Zhang X.-C."/>
            <person name="Shinozaki K."/>
            <person name="Nguyen H.T."/>
            <person name="Wing R.A."/>
            <person name="Cregan P."/>
            <person name="Specht J."/>
            <person name="Grimwood J."/>
            <person name="Rokhsar D."/>
            <person name="Stacey G."/>
            <person name="Shoemaker R.C."/>
            <person name="Jackson S.A."/>
        </authorList>
    </citation>
    <scope>NUCLEOTIDE SEQUENCE [LARGE SCALE GENOMIC DNA]</scope>
    <source>
        <strain>cv. Williams 82</strain>
        <tissue>Callus</tissue>
    </source>
</reference>
<reference key="3">
    <citation type="journal article" date="2003" name="Plant Physiol.">
        <title>Characterization of a plant homolog of hop, a cochaperone of hsp90.</title>
        <authorList>
            <person name="Zhang Z."/>
            <person name="Quick M.K."/>
            <person name="Kanelakis K.C."/>
            <person name="Gijzen M."/>
            <person name="Krishna P."/>
        </authorList>
    </citation>
    <scope>FUNCTION</scope>
    <scope>INTERACTION WITH HSP90</scope>
    <scope>MUTAGENESIS OF 327-THR--GLN-397</scope>
    <scope>TISSUE SPECIFICITY</scope>
    <scope>INDUCTION BY ABIOTIC STRESS</scope>
</reference>
<name>HSOP1_SOYBN</name>
<evidence type="ECO:0000250" key="1"/>
<evidence type="ECO:0000255" key="2"/>
<evidence type="ECO:0000256" key="3">
    <source>
        <dbReference type="SAM" id="MobiDB-lite"/>
    </source>
</evidence>
<evidence type="ECO:0000269" key="4">
    <source>
    </source>
</evidence>
<evidence type="ECO:0000269" key="5">
    <source>
    </source>
</evidence>
<evidence type="ECO:0000305" key="6"/>
<evidence type="ECO:0000312" key="7">
    <source>
        <dbReference type="EMBL" id="CAA56165.1"/>
    </source>
</evidence>
<dbReference type="EMBL" id="CM000850">
    <property type="protein sequence ID" value="KRH04070.1"/>
    <property type="molecule type" value="Genomic_DNA"/>
</dbReference>
<dbReference type="EMBL" id="X79770">
    <property type="protein sequence ID" value="CAA56165.1"/>
    <property type="status" value="ALT_FRAME"/>
    <property type="molecule type" value="mRNA"/>
</dbReference>
<dbReference type="PIR" id="S56658">
    <property type="entry name" value="S56658"/>
</dbReference>
<dbReference type="RefSeq" id="NP_001236261.2">
    <property type="nucleotide sequence ID" value="NM_001249332.2"/>
</dbReference>
<dbReference type="SMR" id="Q43468"/>
<dbReference type="STRING" id="3847.Q43468"/>
<dbReference type="PaxDb" id="3847-GLYMA17G14660.1"/>
<dbReference type="ProMEX" id="Q43468"/>
<dbReference type="EnsemblPlants" id="KRH04070">
    <property type="protein sequence ID" value="KRH04070"/>
    <property type="gene ID" value="GLYMA_17G137700"/>
</dbReference>
<dbReference type="GeneID" id="547932"/>
<dbReference type="Gramene" id="KRH04070">
    <property type="protein sequence ID" value="KRH04070"/>
    <property type="gene ID" value="GLYMA_17G137700"/>
</dbReference>
<dbReference type="KEGG" id="gmx:547932"/>
<dbReference type="eggNOG" id="KOG0548">
    <property type="taxonomic scope" value="Eukaryota"/>
</dbReference>
<dbReference type="HOGENOM" id="CLU_000134_46_5_1"/>
<dbReference type="InParanoid" id="Q43468"/>
<dbReference type="OMA" id="NHDENDH"/>
<dbReference type="OrthoDB" id="2423701at2759"/>
<dbReference type="Proteomes" id="UP000008827">
    <property type="component" value="Chromosome 17"/>
</dbReference>
<dbReference type="GO" id="GO:0005737">
    <property type="term" value="C:cytoplasm"/>
    <property type="evidence" value="ECO:0007669"/>
    <property type="project" value="UniProtKB-SubCell"/>
</dbReference>
<dbReference type="GO" id="GO:0005634">
    <property type="term" value="C:nucleus"/>
    <property type="evidence" value="ECO:0007669"/>
    <property type="project" value="UniProtKB-SubCell"/>
</dbReference>
<dbReference type="GO" id="GO:0051879">
    <property type="term" value="F:Hsp90 protein binding"/>
    <property type="evidence" value="ECO:0000314"/>
    <property type="project" value="UniProtKB"/>
</dbReference>
<dbReference type="GO" id="GO:0070678">
    <property type="term" value="F:preprotein binding"/>
    <property type="evidence" value="ECO:0000250"/>
    <property type="project" value="UniProtKB"/>
</dbReference>
<dbReference type="GO" id="GO:0070417">
    <property type="term" value="P:cellular response to cold"/>
    <property type="evidence" value="ECO:0000270"/>
    <property type="project" value="UniProtKB"/>
</dbReference>
<dbReference type="GO" id="GO:0034605">
    <property type="term" value="P:cellular response to heat"/>
    <property type="evidence" value="ECO:0000270"/>
    <property type="project" value="UniProtKB"/>
</dbReference>
<dbReference type="GO" id="GO:0051131">
    <property type="term" value="P:chaperone-mediated protein complex assembly"/>
    <property type="evidence" value="ECO:0000314"/>
    <property type="project" value="UniProtKB"/>
</dbReference>
<dbReference type="GO" id="GO:0009408">
    <property type="term" value="P:response to heat"/>
    <property type="evidence" value="ECO:0000314"/>
    <property type="project" value="UniProtKB"/>
</dbReference>
<dbReference type="GO" id="GO:0006986">
    <property type="term" value="P:response to unfolded protein"/>
    <property type="evidence" value="ECO:0000314"/>
    <property type="project" value="UniProtKB"/>
</dbReference>
<dbReference type="GO" id="GO:0009611">
    <property type="term" value="P:response to wounding"/>
    <property type="evidence" value="ECO:0000270"/>
    <property type="project" value="UniProtKB"/>
</dbReference>
<dbReference type="FunFam" id="1.25.40.10:FF:000102">
    <property type="entry name" value="hsp70-Hsp90 organizing protein 3-like"/>
    <property type="match status" value="1"/>
</dbReference>
<dbReference type="FunFam" id="1.10.260.100:FF:000004">
    <property type="entry name" value="Putative stress-induced-phosphoprotein 1"/>
    <property type="match status" value="1"/>
</dbReference>
<dbReference type="FunFam" id="1.25.40.10:FF:000010">
    <property type="entry name" value="Stress-induced phosphoprotein 1"/>
    <property type="match status" value="1"/>
</dbReference>
<dbReference type="FunFam" id="1.25.40.10:FF:000020">
    <property type="entry name" value="Stress-induced phosphoprotein 1"/>
    <property type="match status" value="1"/>
</dbReference>
<dbReference type="FunFam" id="1.10.260.100:FF:000002">
    <property type="entry name" value="Stress-induced-phosphoprotein 1 (Hsp70/Hsp90-organizing)"/>
    <property type="match status" value="1"/>
</dbReference>
<dbReference type="Gene3D" id="1.10.260.100">
    <property type="match status" value="2"/>
</dbReference>
<dbReference type="Gene3D" id="1.25.40.10">
    <property type="entry name" value="Tetratricopeptide repeat domain"/>
    <property type="match status" value="3"/>
</dbReference>
<dbReference type="InterPro" id="IPR041243">
    <property type="entry name" value="STI1/HOP_DP"/>
</dbReference>
<dbReference type="InterPro" id="IPR006636">
    <property type="entry name" value="STI1_HS-bd"/>
</dbReference>
<dbReference type="InterPro" id="IPR011990">
    <property type="entry name" value="TPR-like_helical_dom_sf"/>
</dbReference>
<dbReference type="InterPro" id="IPR019734">
    <property type="entry name" value="TPR_rpt"/>
</dbReference>
<dbReference type="PANTHER" id="PTHR22904:SF533">
    <property type="entry name" value="HSP70-HSP90 ORGANIZING PROTEIN 3"/>
    <property type="match status" value="1"/>
</dbReference>
<dbReference type="PANTHER" id="PTHR22904">
    <property type="entry name" value="TPR REPEAT CONTAINING PROTEIN"/>
    <property type="match status" value="1"/>
</dbReference>
<dbReference type="Pfam" id="PF17830">
    <property type="entry name" value="STI1-HOP_DP"/>
    <property type="match status" value="2"/>
</dbReference>
<dbReference type="Pfam" id="PF00515">
    <property type="entry name" value="TPR_1"/>
    <property type="match status" value="1"/>
</dbReference>
<dbReference type="Pfam" id="PF13414">
    <property type="entry name" value="TPR_11"/>
    <property type="match status" value="2"/>
</dbReference>
<dbReference type="Pfam" id="PF13432">
    <property type="entry name" value="TPR_16"/>
    <property type="match status" value="1"/>
</dbReference>
<dbReference type="SMART" id="SM00727">
    <property type="entry name" value="STI1"/>
    <property type="match status" value="2"/>
</dbReference>
<dbReference type="SMART" id="SM00028">
    <property type="entry name" value="TPR"/>
    <property type="match status" value="9"/>
</dbReference>
<dbReference type="SUPFAM" id="SSF48452">
    <property type="entry name" value="TPR-like"/>
    <property type="match status" value="1"/>
</dbReference>
<dbReference type="PROSITE" id="PS50005">
    <property type="entry name" value="TPR"/>
    <property type="match status" value="9"/>
</dbReference>
<dbReference type="PROSITE" id="PS50293">
    <property type="entry name" value="TPR_REGION"/>
    <property type="match status" value="2"/>
</dbReference>
<comment type="function">
    <text evidence="1 4">Mediates nuclear encoded chloroplast preproteins binding to HSP90 prior to chloroplastic sorting (By similarity). Mediates the association of the molecular chaperones HSP70 and HSP90.</text>
</comment>
<comment type="subunit">
    <text evidence="1 4">Co-chaperone that forms a complex with HSP70 and HSP90 and preproteins (e.g. chloroplast preproteins) (By similarity). Interacts with HSP90.</text>
</comment>
<comment type="subcellular location">
    <subcellularLocation>
        <location evidence="1">Cytoplasm</location>
    </subcellularLocation>
    <subcellularLocation>
        <location evidence="1">Nucleus</location>
    </subcellularLocation>
</comment>
<comment type="tissue specificity">
    <text evidence="4">Expressed ubiquitously, with maximal expression in cotyledons, followed by shoots and flowers.</text>
</comment>
<comment type="induction">
    <text evidence="4 5">By heat shock, heat, cold shock and wounding.</text>
</comment>
<comment type="domain">
    <text evidence="1">The tetratricopeptide repeat (TPR) domain, forming a carboxylate clamp (CC), mediates interaction with the highly conserved 'EEVD' motif at the C-terminal ends of HSP90 and HSP70.</text>
</comment>
<comment type="PTM">
    <text evidence="1">Phosphorylated.</text>
</comment>
<comment type="PTM">
    <text evidence="1">Acetylated.</text>
</comment>
<comment type="sequence caution" evidence="6">
    <conflict type="frameshift">
        <sequence resource="EMBL-CDS" id="CAA56165"/>
    </conflict>
</comment>
<keyword id="KW-0007">Acetylation</keyword>
<keyword id="KW-0143">Chaperone</keyword>
<keyword id="KW-0963">Cytoplasm</keyword>
<keyword id="KW-0539">Nucleus</keyword>
<keyword id="KW-0597">Phosphoprotein</keyword>
<keyword id="KW-1185">Reference proteome</keyword>
<keyword id="KW-0677">Repeat</keyword>
<keyword id="KW-0346">Stress response</keyword>
<keyword id="KW-0802">TPR repeat</keyword>
<accession>Q43468</accession>
<accession>A0A0R0FCV3</accession>
<accession>I1MUX1</accession>
<protein>
    <recommendedName>
        <fullName>Hsp70-Hsp90 organizing protein 1</fullName>
        <shortName>GmHop-1</shortName>
    </recommendedName>
    <alternativeName>
        <fullName>Heat shock protein STI</fullName>
        <shortName>GmSTI</shortName>
    </alternativeName>
    <alternativeName>
        <fullName>Stress-inducible protein</fullName>
    </alternativeName>
</protein>
<organism evidence="7">
    <name type="scientific">Glycine max</name>
    <name type="common">Soybean</name>
    <name type="synonym">Glycine hispida</name>
    <dbReference type="NCBI Taxonomy" id="3847"/>
    <lineage>
        <taxon>Eukaryota</taxon>
        <taxon>Viridiplantae</taxon>
        <taxon>Streptophyta</taxon>
        <taxon>Embryophyta</taxon>
        <taxon>Tracheophyta</taxon>
        <taxon>Spermatophyta</taxon>
        <taxon>Magnoliopsida</taxon>
        <taxon>eudicotyledons</taxon>
        <taxon>Gunneridae</taxon>
        <taxon>Pentapetalae</taxon>
        <taxon>rosids</taxon>
        <taxon>fabids</taxon>
        <taxon>Fabales</taxon>
        <taxon>Fabaceae</taxon>
        <taxon>Papilionoideae</taxon>
        <taxon>50 kb inversion clade</taxon>
        <taxon>NPAAA clade</taxon>
        <taxon>indigoferoid/millettioid clade</taxon>
        <taxon>Phaseoleae</taxon>
        <taxon>Glycine</taxon>
        <taxon>Glycine subgen. Soja</taxon>
    </lineage>
</organism>
<sequence>MAEEAKAKGNAAFSAGDFAAAVRHFSDAIALSPSNHVLYSNRSAAHASLQNYAEALADAQKTVDLKPDWPKAYSRLGAAHLGLRRHRDAFSAYKTGLQLDPDNAALKSGLADAQAAASRPPPTSPFATAFSGPDMWARLTADPTARANLQDPEFVKIMQDIQKDPNKFNLHLSDQRVMHAIGVLLNVKIQTPNHDENDHDADDDVSEDEVVSQPEPEHEPEAAVEVAEEEEEEEKETRDRKGQAQKEKEAGNAAYKKKDFETAIGHYSKALELDDEDISYLTNRAAVYLEMGKFEDCIKDCEKAVERGKELRSDYKMIARALTRKGTALAKMAKCSKDFEPAIEIFQKALTENRNPDTLKKLNEAEKAKKELEQQEYFDPKLADEAREKGNELFKQQKYPEATKHYTEAIKRNPKDAKAYSNRAACYTKLGAMPEGLKDAEKCIELDPTFSKGYTRKGAVQFSMKEYDKALETYREGLKHDPNNQELLDGIRRCVEQINKASRGDFTPEELKERQAKAMQDPEIQSILQDPVMTQVLTDFQENPRAAEEHVKNPMVMNKIQKLISAGIVQMR</sequence>
<gene>
    <name type="primary">HOP1</name>
    <name type="synonym">STI</name>
    <name type="ordered locus">Glyma17g137700</name>
</gene>
<feature type="chain" id="PRO_0000106328" description="Hsp70-Hsp90 organizing protein 1">
    <location>
        <begin position="1"/>
        <end position="572"/>
    </location>
</feature>
<feature type="repeat" description="TPR 1" evidence="6">
    <location>
        <begin position="2"/>
        <end position="35"/>
    </location>
</feature>
<feature type="repeat" description="TPR 2">
    <location>
        <begin position="37"/>
        <end position="69"/>
    </location>
</feature>
<feature type="repeat" description="TPR 3">
    <location>
        <begin position="70"/>
        <end position="103"/>
    </location>
</feature>
<feature type="domain" description="STI1 1">
    <location>
        <begin position="142"/>
        <end position="181"/>
    </location>
</feature>
<feature type="repeat" description="TPR 4">
    <location>
        <begin position="244"/>
        <end position="277"/>
    </location>
</feature>
<feature type="repeat" description="TPR 5">
    <location>
        <begin position="279"/>
        <end position="311"/>
    </location>
</feature>
<feature type="repeat" description="TPR 6">
    <location>
        <begin position="319"/>
        <end position="356"/>
    </location>
</feature>
<feature type="repeat" description="TPR 7">
    <location>
        <begin position="383"/>
        <end position="416"/>
    </location>
</feature>
<feature type="repeat" description="TPR 8">
    <location>
        <begin position="417"/>
        <end position="450"/>
    </location>
</feature>
<feature type="repeat" description="TPR 9">
    <location>
        <begin position="451"/>
        <end position="484"/>
    </location>
</feature>
<feature type="domain" description="STI1 2">
    <location>
        <begin position="521"/>
        <end position="560"/>
    </location>
</feature>
<feature type="region of interest" description="Disordered" evidence="3">
    <location>
        <begin position="192"/>
        <end position="253"/>
    </location>
</feature>
<feature type="short sequence motif" description="Bipartite nuclear localization signal" evidence="2">
    <location>
        <begin position="241"/>
        <end position="258"/>
    </location>
</feature>
<feature type="compositionally biased region" description="Acidic residues" evidence="3">
    <location>
        <begin position="198"/>
        <end position="210"/>
    </location>
</feature>
<feature type="compositionally biased region" description="Basic and acidic residues" evidence="3">
    <location>
        <begin position="235"/>
        <end position="253"/>
    </location>
</feature>
<feature type="mutagenesis site" description="Loss of binding with HSP90." evidence="4">
    <location>
        <begin position="327"/>
        <end position="397"/>
    </location>
</feature>